<protein>
    <recommendedName>
        <fullName evidence="1">Glycerol kinase</fullName>
        <ecNumber evidence="1">2.7.1.30</ecNumber>
    </recommendedName>
    <alternativeName>
        <fullName evidence="1">ATP:glycerol 3-phosphotransferase</fullName>
    </alternativeName>
    <alternativeName>
        <fullName evidence="1">Glycerokinase</fullName>
        <shortName evidence="1">GK</shortName>
    </alternativeName>
</protein>
<accession>A9KY18</accession>
<name>GLPK_SHEB9</name>
<evidence type="ECO:0000255" key="1">
    <source>
        <dbReference type="HAMAP-Rule" id="MF_00186"/>
    </source>
</evidence>
<reference key="1">
    <citation type="submission" date="2007-11" db="EMBL/GenBank/DDBJ databases">
        <title>Complete sequence of chromosome of Shewanella baltica OS195.</title>
        <authorList>
            <consortium name="US DOE Joint Genome Institute"/>
            <person name="Copeland A."/>
            <person name="Lucas S."/>
            <person name="Lapidus A."/>
            <person name="Barry K."/>
            <person name="Glavina del Rio T."/>
            <person name="Dalin E."/>
            <person name="Tice H."/>
            <person name="Pitluck S."/>
            <person name="Chain P."/>
            <person name="Malfatti S."/>
            <person name="Shin M."/>
            <person name="Vergez L."/>
            <person name="Schmutz J."/>
            <person name="Larimer F."/>
            <person name="Land M."/>
            <person name="Hauser L."/>
            <person name="Kyrpides N."/>
            <person name="Kim E."/>
            <person name="Brettar I."/>
            <person name="Rodrigues J."/>
            <person name="Konstantinidis K."/>
            <person name="Klappenbach J."/>
            <person name="Hofle M."/>
            <person name="Tiedje J."/>
            <person name="Richardson P."/>
        </authorList>
    </citation>
    <scope>NUCLEOTIDE SEQUENCE [LARGE SCALE GENOMIC DNA]</scope>
    <source>
        <strain>OS195</strain>
    </source>
</reference>
<comment type="function">
    <text evidence="1">Key enzyme in the regulation of glycerol uptake and metabolism. Catalyzes the phosphorylation of glycerol to yield sn-glycerol 3-phosphate.</text>
</comment>
<comment type="catalytic activity">
    <reaction evidence="1">
        <text>glycerol + ATP = sn-glycerol 3-phosphate + ADP + H(+)</text>
        <dbReference type="Rhea" id="RHEA:21644"/>
        <dbReference type="ChEBI" id="CHEBI:15378"/>
        <dbReference type="ChEBI" id="CHEBI:17754"/>
        <dbReference type="ChEBI" id="CHEBI:30616"/>
        <dbReference type="ChEBI" id="CHEBI:57597"/>
        <dbReference type="ChEBI" id="CHEBI:456216"/>
        <dbReference type="EC" id="2.7.1.30"/>
    </reaction>
</comment>
<comment type="activity regulation">
    <text evidence="1">Inhibited by fructose 1,6-bisphosphate (FBP).</text>
</comment>
<comment type="pathway">
    <text evidence="1">Polyol metabolism; glycerol degradation via glycerol kinase pathway; sn-glycerol 3-phosphate from glycerol: step 1/1.</text>
</comment>
<comment type="similarity">
    <text evidence="1">Belongs to the FGGY kinase family.</text>
</comment>
<keyword id="KW-0067">ATP-binding</keyword>
<keyword id="KW-0319">Glycerol metabolism</keyword>
<keyword id="KW-0418">Kinase</keyword>
<keyword id="KW-0547">Nucleotide-binding</keyword>
<keyword id="KW-0808">Transferase</keyword>
<feature type="chain" id="PRO_1000077428" description="Glycerol kinase">
    <location>
        <begin position="1"/>
        <end position="494"/>
    </location>
</feature>
<feature type="binding site" evidence="1">
    <location>
        <position position="13"/>
    </location>
    <ligand>
        <name>ADP</name>
        <dbReference type="ChEBI" id="CHEBI:456216"/>
    </ligand>
</feature>
<feature type="binding site" evidence="1">
    <location>
        <position position="13"/>
    </location>
    <ligand>
        <name>ATP</name>
        <dbReference type="ChEBI" id="CHEBI:30616"/>
    </ligand>
</feature>
<feature type="binding site" evidence="1">
    <location>
        <position position="13"/>
    </location>
    <ligand>
        <name>sn-glycerol 3-phosphate</name>
        <dbReference type="ChEBI" id="CHEBI:57597"/>
    </ligand>
</feature>
<feature type="binding site" evidence="1">
    <location>
        <position position="14"/>
    </location>
    <ligand>
        <name>ATP</name>
        <dbReference type="ChEBI" id="CHEBI:30616"/>
    </ligand>
</feature>
<feature type="binding site" evidence="1">
    <location>
        <position position="15"/>
    </location>
    <ligand>
        <name>ATP</name>
        <dbReference type="ChEBI" id="CHEBI:30616"/>
    </ligand>
</feature>
<feature type="binding site" evidence="1">
    <location>
        <position position="17"/>
    </location>
    <ligand>
        <name>ADP</name>
        <dbReference type="ChEBI" id="CHEBI:456216"/>
    </ligand>
</feature>
<feature type="binding site" evidence="1">
    <location>
        <position position="83"/>
    </location>
    <ligand>
        <name>glycerol</name>
        <dbReference type="ChEBI" id="CHEBI:17754"/>
    </ligand>
</feature>
<feature type="binding site" evidence="1">
    <location>
        <position position="83"/>
    </location>
    <ligand>
        <name>sn-glycerol 3-phosphate</name>
        <dbReference type="ChEBI" id="CHEBI:57597"/>
    </ligand>
</feature>
<feature type="binding site" evidence="1">
    <location>
        <position position="84"/>
    </location>
    <ligand>
        <name>glycerol</name>
        <dbReference type="ChEBI" id="CHEBI:17754"/>
    </ligand>
</feature>
<feature type="binding site" evidence="1">
    <location>
        <position position="84"/>
    </location>
    <ligand>
        <name>sn-glycerol 3-phosphate</name>
        <dbReference type="ChEBI" id="CHEBI:57597"/>
    </ligand>
</feature>
<feature type="binding site" evidence="1">
    <location>
        <position position="135"/>
    </location>
    <ligand>
        <name>glycerol</name>
        <dbReference type="ChEBI" id="CHEBI:17754"/>
    </ligand>
</feature>
<feature type="binding site" evidence="1">
    <location>
        <position position="135"/>
    </location>
    <ligand>
        <name>sn-glycerol 3-phosphate</name>
        <dbReference type="ChEBI" id="CHEBI:57597"/>
    </ligand>
</feature>
<feature type="binding site" evidence="1">
    <location>
        <position position="244"/>
    </location>
    <ligand>
        <name>glycerol</name>
        <dbReference type="ChEBI" id="CHEBI:17754"/>
    </ligand>
</feature>
<feature type="binding site" evidence="1">
    <location>
        <position position="244"/>
    </location>
    <ligand>
        <name>sn-glycerol 3-phosphate</name>
        <dbReference type="ChEBI" id="CHEBI:57597"/>
    </ligand>
</feature>
<feature type="binding site" evidence="1">
    <location>
        <position position="245"/>
    </location>
    <ligand>
        <name>glycerol</name>
        <dbReference type="ChEBI" id="CHEBI:17754"/>
    </ligand>
</feature>
<feature type="binding site" evidence="1">
    <location>
        <position position="266"/>
    </location>
    <ligand>
        <name>ADP</name>
        <dbReference type="ChEBI" id="CHEBI:456216"/>
    </ligand>
</feature>
<feature type="binding site" evidence="1">
    <location>
        <position position="266"/>
    </location>
    <ligand>
        <name>ATP</name>
        <dbReference type="ChEBI" id="CHEBI:30616"/>
    </ligand>
</feature>
<feature type="binding site" evidence="1">
    <location>
        <position position="309"/>
    </location>
    <ligand>
        <name>ADP</name>
        <dbReference type="ChEBI" id="CHEBI:456216"/>
    </ligand>
</feature>
<feature type="binding site" evidence="1">
    <location>
        <position position="309"/>
    </location>
    <ligand>
        <name>ATP</name>
        <dbReference type="ChEBI" id="CHEBI:30616"/>
    </ligand>
</feature>
<feature type="binding site" evidence="1">
    <location>
        <position position="313"/>
    </location>
    <ligand>
        <name>ATP</name>
        <dbReference type="ChEBI" id="CHEBI:30616"/>
    </ligand>
</feature>
<feature type="binding site" evidence="1">
    <location>
        <position position="410"/>
    </location>
    <ligand>
        <name>ADP</name>
        <dbReference type="ChEBI" id="CHEBI:456216"/>
    </ligand>
</feature>
<feature type="binding site" evidence="1">
    <location>
        <position position="410"/>
    </location>
    <ligand>
        <name>ATP</name>
        <dbReference type="ChEBI" id="CHEBI:30616"/>
    </ligand>
</feature>
<feature type="binding site" evidence="1">
    <location>
        <position position="414"/>
    </location>
    <ligand>
        <name>ADP</name>
        <dbReference type="ChEBI" id="CHEBI:456216"/>
    </ligand>
</feature>
<sequence>MQKKYVVALDQGTTSSRAIVFDHDANIVSVSQREFTQLYPNPGWVEHDPMEIWASQSSVLIEVLARAGIHSDEVAAIGITNQRETTVIWEKATGKPIYNAIVWQCRRSSEICEQLKAQGLEEYVRENTGLLLDPYFSGTKIKWILDNVPNARAQAERGELLFGTIDTWLVWKLTEGKVHVTDPTNAARTLLFNIHSLTWDNKLLEALNIPLSLLPEVKPSCSVYGTTRIAGEGSEIQVAGMAGDQQAALFGQLCVEPGMAKNTYGTGCFLLMNTGTKAVRSNHGLLTTVAVGPKGEVNYALEGSVFMGGATIQWLRDELGLIRDASDTEYFASKVADTNGVYLVPAFVGLGAPYWDPNARGAIFGLTRGANRNHIIRAALESIAYQSKDLLDAMTKDSGVSLKRLKVDGGAVANDFLMQFQADITDVEVLRPSVCETTALGAAFLAGLAVGFWESVIELEHKACIDKHFIPNIDAETRVRLYAGWQDAVARTRA</sequence>
<gene>
    <name evidence="1" type="primary">glpK</name>
    <name type="ordered locus">Sbal195_0402</name>
</gene>
<proteinExistence type="inferred from homology"/>
<dbReference type="EC" id="2.7.1.30" evidence="1"/>
<dbReference type="EMBL" id="CP000891">
    <property type="protein sequence ID" value="ABX47583.1"/>
    <property type="molecule type" value="Genomic_DNA"/>
</dbReference>
<dbReference type="RefSeq" id="WP_006086693.1">
    <property type="nucleotide sequence ID" value="NC_009997.1"/>
</dbReference>
<dbReference type="SMR" id="A9KY18"/>
<dbReference type="GeneID" id="11770741"/>
<dbReference type="KEGG" id="sbn:Sbal195_0402"/>
<dbReference type="HOGENOM" id="CLU_009281_2_3_6"/>
<dbReference type="UniPathway" id="UPA00618">
    <property type="reaction ID" value="UER00672"/>
</dbReference>
<dbReference type="Proteomes" id="UP000000770">
    <property type="component" value="Chromosome"/>
</dbReference>
<dbReference type="GO" id="GO:0005829">
    <property type="term" value="C:cytosol"/>
    <property type="evidence" value="ECO:0007669"/>
    <property type="project" value="TreeGrafter"/>
</dbReference>
<dbReference type="GO" id="GO:0005524">
    <property type="term" value="F:ATP binding"/>
    <property type="evidence" value="ECO:0007669"/>
    <property type="project" value="UniProtKB-UniRule"/>
</dbReference>
<dbReference type="GO" id="GO:0004370">
    <property type="term" value="F:glycerol kinase activity"/>
    <property type="evidence" value="ECO:0000250"/>
    <property type="project" value="UniProtKB"/>
</dbReference>
<dbReference type="GO" id="GO:0019563">
    <property type="term" value="P:glycerol catabolic process"/>
    <property type="evidence" value="ECO:0007669"/>
    <property type="project" value="UniProtKB-UniRule"/>
</dbReference>
<dbReference type="GO" id="GO:0006071">
    <property type="term" value="P:glycerol metabolic process"/>
    <property type="evidence" value="ECO:0000250"/>
    <property type="project" value="UniProtKB"/>
</dbReference>
<dbReference type="GO" id="GO:0006072">
    <property type="term" value="P:glycerol-3-phosphate metabolic process"/>
    <property type="evidence" value="ECO:0007669"/>
    <property type="project" value="InterPro"/>
</dbReference>
<dbReference type="CDD" id="cd07786">
    <property type="entry name" value="FGGY_EcGK_like"/>
    <property type="match status" value="1"/>
</dbReference>
<dbReference type="FunFam" id="3.30.420.40:FF:000007">
    <property type="entry name" value="Glycerol kinase"/>
    <property type="match status" value="1"/>
</dbReference>
<dbReference type="FunFam" id="3.30.420.40:FF:000008">
    <property type="entry name" value="Glycerol kinase"/>
    <property type="match status" value="1"/>
</dbReference>
<dbReference type="Gene3D" id="3.30.420.40">
    <property type="match status" value="2"/>
</dbReference>
<dbReference type="HAMAP" id="MF_00186">
    <property type="entry name" value="Glycerol_kin"/>
    <property type="match status" value="1"/>
</dbReference>
<dbReference type="InterPro" id="IPR043129">
    <property type="entry name" value="ATPase_NBD"/>
</dbReference>
<dbReference type="InterPro" id="IPR000577">
    <property type="entry name" value="Carb_kinase_FGGY"/>
</dbReference>
<dbReference type="InterPro" id="IPR018483">
    <property type="entry name" value="Carb_kinase_FGGY_CS"/>
</dbReference>
<dbReference type="InterPro" id="IPR018485">
    <property type="entry name" value="FGGY_C"/>
</dbReference>
<dbReference type="InterPro" id="IPR018484">
    <property type="entry name" value="FGGY_N"/>
</dbReference>
<dbReference type="InterPro" id="IPR005999">
    <property type="entry name" value="Glycerol_kin"/>
</dbReference>
<dbReference type="NCBIfam" id="TIGR01311">
    <property type="entry name" value="glycerol_kin"/>
    <property type="match status" value="1"/>
</dbReference>
<dbReference type="NCBIfam" id="NF000756">
    <property type="entry name" value="PRK00047.1"/>
    <property type="match status" value="1"/>
</dbReference>
<dbReference type="PANTHER" id="PTHR10196:SF69">
    <property type="entry name" value="GLYCEROL KINASE"/>
    <property type="match status" value="1"/>
</dbReference>
<dbReference type="PANTHER" id="PTHR10196">
    <property type="entry name" value="SUGAR KINASE"/>
    <property type="match status" value="1"/>
</dbReference>
<dbReference type="Pfam" id="PF02782">
    <property type="entry name" value="FGGY_C"/>
    <property type="match status" value="1"/>
</dbReference>
<dbReference type="Pfam" id="PF00370">
    <property type="entry name" value="FGGY_N"/>
    <property type="match status" value="1"/>
</dbReference>
<dbReference type="PIRSF" id="PIRSF000538">
    <property type="entry name" value="GlpK"/>
    <property type="match status" value="1"/>
</dbReference>
<dbReference type="SUPFAM" id="SSF53067">
    <property type="entry name" value="Actin-like ATPase domain"/>
    <property type="match status" value="2"/>
</dbReference>
<dbReference type="PROSITE" id="PS00933">
    <property type="entry name" value="FGGY_KINASES_1"/>
    <property type="match status" value="1"/>
</dbReference>
<dbReference type="PROSITE" id="PS00445">
    <property type="entry name" value="FGGY_KINASES_2"/>
    <property type="match status" value="1"/>
</dbReference>
<organism>
    <name type="scientific">Shewanella baltica (strain OS195)</name>
    <dbReference type="NCBI Taxonomy" id="399599"/>
    <lineage>
        <taxon>Bacteria</taxon>
        <taxon>Pseudomonadati</taxon>
        <taxon>Pseudomonadota</taxon>
        <taxon>Gammaproteobacteria</taxon>
        <taxon>Alteromonadales</taxon>
        <taxon>Shewanellaceae</taxon>
        <taxon>Shewanella</taxon>
    </lineage>
</organism>